<name>LEU1_GLOC7</name>
<organism>
    <name type="scientific">Gloeothece citriformis (strain PCC 7424)</name>
    <name type="common">Cyanothece sp. (strain PCC 7424)</name>
    <dbReference type="NCBI Taxonomy" id="65393"/>
    <lineage>
        <taxon>Bacteria</taxon>
        <taxon>Bacillati</taxon>
        <taxon>Cyanobacteriota</taxon>
        <taxon>Cyanophyceae</taxon>
        <taxon>Oscillatoriophycideae</taxon>
        <taxon>Chroococcales</taxon>
        <taxon>Aphanothecaceae</taxon>
        <taxon>Gloeothece</taxon>
        <taxon>Gloeothece citriformis</taxon>
    </lineage>
</organism>
<reference key="1">
    <citation type="journal article" date="2011" name="MBio">
        <title>Novel metabolic attributes of the genus Cyanothece, comprising a group of unicellular nitrogen-fixing Cyanobacteria.</title>
        <authorList>
            <person name="Bandyopadhyay A."/>
            <person name="Elvitigala T."/>
            <person name="Welsh E."/>
            <person name="Stockel J."/>
            <person name="Liberton M."/>
            <person name="Min H."/>
            <person name="Sherman L.A."/>
            <person name="Pakrasi H.B."/>
        </authorList>
    </citation>
    <scope>NUCLEOTIDE SEQUENCE [LARGE SCALE GENOMIC DNA]</scope>
    <source>
        <strain>PCC 7424</strain>
    </source>
</reference>
<keyword id="KW-0028">Amino-acid biosynthesis</keyword>
<keyword id="KW-0100">Branched-chain amino acid biosynthesis</keyword>
<keyword id="KW-0963">Cytoplasm</keyword>
<keyword id="KW-0432">Leucine biosynthesis</keyword>
<keyword id="KW-0464">Manganese</keyword>
<keyword id="KW-0479">Metal-binding</keyword>
<keyword id="KW-1185">Reference proteome</keyword>
<keyword id="KW-0808">Transferase</keyword>
<sequence length="536" mass="58090">MSNQPNRIIIFDTTLRDGEQSPGATLNGDEKLTVARALARLGVDVIEAGFPYASPGDFEAVQQIAKVVGVEGGPSICGLARATKADIAKAAEALKPAAKPRIHTFLATSDIHLAYKLKKTRQEVLEIVPEMVAYAKSFVDDVEFSPEDAGRSDPEFLYQVLERAIAAGATTVNIPDTVGYLTPSEFGQLIRGIKENVPNIDQAIISVHGHNDLGLAVANFLEAVKNGARQLECTINGIGERAGNAALEELVMALHVRRQYYNPFLGRPVDSTEPLTNINTKEIYKTSRLVSNLTGMAVQPNKAIVGANAFAHESGIHQDGVLKNKLTYEIMDAESIGLTNNQIVLGKLSGRHAFSTRLKELGFELSETDLNKAFLRFKEVADKKKEITDWDLEAIVNDEIQQAPEVFRLELVQVSCGDQARPTATVILRGPEGQELMDAAIGTGPVDAVYKAINRVVNVPNQLIEFSVKSVTAGIDAMGEVTIRLKYENRIFSGHAANTDIIVASARAYISALNRLYAAIEQEKAEKEKAAVTSAS</sequence>
<feature type="chain" id="PRO_1000149173" description="2-isopropylmalate synthase">
    <location>
        <begin position="1"/>
        <end position="536"/>
    </location>
</feature>
<feature type="domain" description="Pyruvate carboxyltransferase" evidence="1">
    <location>
        <begin position="8"/>
        <end position="269"/>
    </location>
</feature>
<feature type="region of interest" description="Regulatory domain" evidence="1">
    <location>
        <begin position="408"/>
        <end position="536"/>
    </location>
</feature>
<feature type="binding site" evidence="1">
    <location>
        <position position="17"/>
    </location>
    <ligand>
        <name>Mn(2+)</name>
        <dbReference type="ChEBI" id="CHEBI:29035"/>
    </ligand>
</feature>
<feature type="binding site" evidence="1">
    <location>
        <position position="208"/>
    </location>
    <ligand>
        <name>Mn(2+)</name>
        <dbReference type="ChEBI" id="CHEBI:29035"/>
    </ligand>
</feature>
<feature type="binding site" evidence="1">
    <location>
        <position position="210"/>
    </location>
    <ligand>
        <name>Mn(2+)</name>
        <dbReference type="ChEBI" id="CHEBI:29035"/>
    </ligand>
</feature>
<feature type="binding site" evidence="1">
    <location>
        <position position="244"/>
    </location>
    <ligand>
        <name>Mn(2+)</name>
        <dbReference type="ChEBI" id="CHEBI:29035"/>
    </ligand>
</feature>
<protein>
    <recommendedName>
        <fullName evidence="1">2-isopropylmalate synthase</fullName>
        <ecNumber evidence="1">2.3.3.13</ecNumber>
    </recommendedName>
    <alternativeName>
        <fullName evidence="1">Alpha-IPM synthase</fullName>
    </alternativeName>
    <alternativeName>
        <fullName evidence="1">Alpha-isopropylmalate synthase</fullName>
    </alternativeName>
</protein>
<dbReference type="EC" id="2.3.3.13" evidence="1"/>
<dbReference type="EMBL" id="CP001291">
    <property type="protein sequence ID" value="ACK69577.1"/>
    <property type="molecule type" value="Genomic_DNA"/>
</dbReference>
<dbReference type="RefSeq" id="WP_012598523.1">
    <property type="nucleotide sequence ID" value="NC_011729.1"/>
</dbReference>
<dbReference type="SMR" id="B7KJX8"/>
<dbReference type="STRING" id="65393.PCC7424_1126"/>
<dbReference type="KEGG" id="cyc:PCC7424_1126"/>
<dbReference type="eggNOG" id="COG0119">
    <property type="taxonomic scope" value="Bacteria"/>
</dbReference>
<dbReference type="HOGENOM" id="CLU_022158_0_1_3"/>
<dbReference type="OrthoDB" id="9804858at2"/>
<dbReference type="UniPathway" id="UPA00048">
    <property type="reaction ID" value="UER00070"/>
</dbReference>
<dbReference type="Proteomes" id="UP000002384">
    <property type="component" value="Chromosome"/>
</dbReference>
<dbReference type="GO" id="GO:0005737">
    <property type="term" value="C:cytoplasm"/>
    <property type="evidence" value="ECO:0007669"/>
    <property type="project" value="UniProtKB-SubCell"/>
</dbReference>
<dbReference type="GO" id="GO:0003852">
    <property type="term" value="F:2-isopropylmalate synthase activity"/>
    <property type="evidence" value="ECO:0007669"/>
    <property type="project" value="UniProtKB-UniRule"/>
</dbReference>
<dbReference type="GO" id="GO:0003985">
    <property type="term" value="F:acetyl-CoA C-acetyltransferase activity"/>
    <property type="evidence" value="ECO:0007669"/>
    <property type="project" value="UniProtKB-UniRule"/>
</dbReference>
<dbReference type="GO" id="GO:0030145">
    <property type="term" value="F:manganese ion binding"/>
    <property type="evidence" value="ECO:0007669"/>
    <property type="project" value="UniProtKB-UniRule"/>
</dbReference>
<dbReference type="GO" id="GO:0009098">
    <property type="term" value="P:L-leucine biosynthetic process"/>
    <property type="evidence" value="ECO:0007669"/>
    <property type="project" value="UniProtKB-UniRule"/>
</dbReference>
<dbReference type="CDD" id="cd07940">
    <property type="entry name" value="DRE_TIM_IPMS"/>
    <property type="match status" value="1"/>
</dbReference>
<dbReference type="FunFam" id="1.10.238.260:FF:000001">
    <property type="entry name" value="2-isopropylmalate synthase"/>
    <property type="match status" value="1"/>
</dbReference>
<dbReference type="FunFam" id="3.20.20.70:FF:000010">
    <property type="entry name" value="2-isopropylmalate synthase"/>
    <property type="match status" value="1"/>
</dbReference>
<dbReference type="FunFam" id="3.30.160.270:FF:000001">
    <property type="entry name" value="2-isopropylmalate synthase"/>
    <property type="match status" value="1"/>
</dbReference>
<dbReference type="Gene3D" id="1.10.238.260">
    <property type="match status" value="1"/>
</dbReference>
<dbReference type="Gene3D" id="3.30.160.270">
    <property type="match status" value="1"/>
</dbReference>
<dbReference type="Gene3D" id="3.20.20.70">
    <property type="entry name" value="Aldolase class I"/>
    <property type="match status" value="1"/>
</dbReference>
<dbReference type="HAMAP" id="MF_01025">
    <property type="entry name" value="LeuA_type1"/>
    <property type="match status" value="1"/>
</dbReference>
<dbReference type="InterPro" id="IPR050073">
    <property type="entry name" value="2-IPM_HCS-like"/>
</dbReference>
<dbReference type="InterPro" id="IPR013709">
    <property type="entry name" value="2-isopropylmalate_synth_dimer"/>
</dbReference>
<dbReference type="InterPro" id="IPR002034">
    <property type="entry name" value="AIPM/Hcit_synth_CS"/>
</dbReference>
<dbReference type="InterPro" id="IPR013785">
    <property type="entry name" value="Aldolase_TIM"/>
</dbReference>
<dbReference type="InterPro" id="IPR054691">
    <property type="entry name" value="LeuA/HCS_post-cat"/>
</dbReference>
<dbReference type="InterPro" id="IPR036230">
    <property type="entry name" value="LeuA_allosteric_dom_sf"/>
</dbReference>
<dbReference type="InterPro" id="IPR005671">
    <property type="entry name" value="LeuA_bact_synth"/>
</dbReference>
<dbReference type="InterPro" id="IPR000891">
    <property type="entry name" value="PYR_CT"/>
</dbReference>
<dbReference type="NCBIfam" id="TIGR00973">
    <property type="entry name" value="leuA_bact"/>
    <property type="match status" value="1"/>
</dbReference>
<dbReference type="NCBIfam" id="NF002086">
    <property type="entry name" value="PRK00915.1-3"/>
    <property type="match status" value="1"/>
</dbReference>
<dbReference type="PANTHER" id="PTHR10277:SF9">
    <property type="entry name" value="2-ISOPROPYLMALATE SYNTHASE 1, CHLOROPLASTIC-RELATED"/>
    <property type="match status" value="1"/>
</dbReference>
<dbReference type="PANTHER" id="PTHR10277">
    <property type="entry name" value="HOMOCITRATE SYNTHASE-RELATED"/>
    <property type="match status" value="1"/>
</dbReference>
<dbReference type="Pfam" id="PF22617">
    <property type="entry name" value="HCS_D2"/>
    <property type="match status" value="1"/>
</dbReference>
<dbReference type="Pfam" id="PF00682">
    <property type="entry name" value="HMGL-like"/>
    <property type="match status" value="1"/>
</dbReference>
<dbReference type="Pfam" id="PF08502">
    <property type="entry name" value="LeuA_dimer"/>
    <property type="match status" value="1"/>
</dbReference>
<dbReference type="SMART" id="SM00917">
    <property type="entry name" value="LeuA_dimer"/>
    <property type="match status" value="1"/>
</dbReference>
<dbReference type="SUPFAM" id="SSF110921">
    <property type="entry name" value="2-isopropylmalate synthase LeuA, allosteric (dimerisation) domain"/>
    <property type="match status" value="1"/>
</dbReference>
<dbReference type="SUPFAM" id="SSF51569">
    <property type="entry name" value="Aldolase"/>
    <property type="match status" value="1"/>
</dbReference>
<dbReference type="PROSITE" id="PS00815">
    <property type="entry name" value="AIPM_HOMOCIT_SYNTH_1"/>
    <property type="match status" value="1"/>
</dbReference>
<dbReference type="PROSITE" id="PS00816">
    <property type="entry name" value="AIPM_HOMOCIT_SYNTH_2"/>
    <property type="match status" value="1"/>
</dbReference>
<dbReference type="PROSITE" id="PS50991">
    <property type="entry name" value="PYR_CT"/>
    <property type="match status" value="1"/>
</dbReference>
<gene>
    <name evidence="1" type="primary">leuA</name>
    <name type="ordered locus">PCC7424_1126</name>
</gene>
<comment type="function">
    <text evidence="1">Catalyzes the condensation of the acetyl group of acetyl-CoA with 3-methyl-2-oxobutanoate (2-ketoisovalerate) to form 3-carboxy-3-hydroxy-4-methylpentanoate (2-isopropylmalate).</text>
</comment>
<comment type="catalytic activity">
    <reaction evidence="1">
        <text>3-methyl-2-oxobutanoate + acetyl-CoA + H2O = (2S)-2-isopropylmalate + CoA + H(+)</text>
        <dbReference type="Rhea" id="RHEA:21524"/>
        <dbReference type="ChEBI" id="CHEBI:1178"/>
        <dbReference type="ChEBI" id="CHEBI:11851"/>
        <dbReference type="ChEBI" id="CHEBI:15377"/>
        <dbReference type="ChEBI" id="CHEBI:15378"/>
        <dbReference type="ChEBI" id="CHEBI:57287"/>
        <dbReference type="ChEBI" id="CHEBI:57288"/>
        <dbReference type="EC" id="2.3.3.13"/>
    </reaction>
</comment>
<comment type="cofactor">
    <cofactor evidence="1">
        <name>Mn(2+)</name>
        <dbReference type="ChEBI" id="CHEBI:29035"/>
    </cofactor>
</comment>
<comment type="pathway">
    <text evidence="1">Amino-acid biosynthesis; L-leucine biosynthesis; L-leucine from 3-methyl-2-oxobutanoate: step 1/4.</text>
</comment>
<comment type="subunit">
    <text evidence="1">Homodimer.</text>
</comment>
<comment type="subcellular location">
    <subcellularLocation>
        <location evidence="1">Cytoplasm</location>
    </subcellularLocation>
</comment>
<comment type="similarity">
    <text evidence="1">Belongs to the alpha-IPM synthase/homocitrate synthase family. LeuA type 1 subfamily.</text>
</comment>
<accession>B7KJX8</accession>
<evidence type="ECO:0000255" key="1">
    <source>
        <dbReference type="HAMAP-Rule" id="MF_01025"/>
    </source>
</evidence>
<proteinExistence type="inferred from homology"/>